<proteinExistence type="evidence at protein level"/>
<protein>
    <recommendedName>
        <fullName evidence="5">Conopressin-conophysin, isoform 1</fullName>
    </recommendedName>
    <component>
        <recommendedName>
            <fullName evidence="5">Conopressin-E</fullName>
        </recommendedName>
    </component>
    <component>
        <recommendedName>
            <fullName evidence="5">Conophysin</fullName>
        </recommendedName>
    </component>
</protein>
<dbReference type="EMBL" id="KY982973">
    <property type="protein sequence ID" value="ATJ04134.1"/>
    <property type="molecule type" value="mRNA"/>
</dbReference>
<dbReference type="SMR" id="A0A291NVT7"/>
<dbReference type="GO" id="GO:0005615">
    <property type="term" value="C:extracellular space"/>
    <property type="evidence" value="ECO:0007669"/>
    <property type="project" value="TreeGrafter"/>
</dbReference>
<dbReference type="GO" id="GO:0030141">
    <property type="term" value="C:secretory granule"/>
    <property type="evidence" value="ECO:0007669"/>
    <property type="project" value="TreeGrafter"/>
</dbReference>
<dbReference type="GO" id="GO:0005185">
    <property type="term" value="F:neurohypophyseal hormone activity"/>
    <property type="evidence" value="ECO:0007669"/>
    <property type="project" value="InterPro"/>
</dbReference>
<dbReference type="GO" id="GO:0090729">
    <property type="term" value="F:toxin activity"/>
    <property type="evidence" value="ECO:0007669"/>
    <property type="project" value="UniProtKB-KW"/>
</dbReference>
<dbReference type="Gene3D" id="2.60.9.10">
    <property type="entry name" value="Neurohypophysial hormone domain"/>
    <property type="match status" value="1"/>
</dbReference>
<dbReference type="InterPro" id="IPR000981">
    <property type="entry name" value="Neurhyp_horm"/>
</dbReference>
<dbReference type="InterPro" id="IPR036387">
    <property type="entry name" value="Neurhyp_horm_dom_sf"/>
</dbReference>
<dbReference type="InterPro" id="IPR022423">
    <property type="entry name" value="Neurohypophysial_hormone_CS"/>
</dbReference>
<dbReference type="PANTHER" id="PTHR11681:SF5">
    <property type="entry name" value="ISOTOCIN"/>
    <property type="match status" value="1"/>
</dbReference>
<dbReference type="PANTHER" id="PTHR11681">
    <property type="entry name" value="NEUROPHYSIN"/>
    <property type="match status" value="1"/>
</dbReference>
<dbReference type="Pfam" id="PF00184">
    <property type="entry name" value="Hormone_5"/>
    <property type="match status" value="1"/>
</dbReference>
<dbReference type="PRINTS" id="PR00831">
    <property type="entry name" value="NEUROPHYSIN"/>
</dbReference>
<dbReference type="SMART" id="SM00003">
    <property type="entry name" value="NH"/>
    <property type="match status" value="1"/>
</dbReference>
<dbReference type="SUPFAM" id="SSF49606">
    <property type="entry name" value="Neurophysin II"/>
    <property type="match status" value="1"/>
</dbReference>
<dbReference type="PROSITE" id="PS00264">
    <property type="entry name" value="NEUROHYPOPHYS_HORM"/>
    <property type="match status" value="1"/>
</dbReference>
<organism>
    <name type="scientific">Conus monile</name>
    <name type="common">Necklace cone</name>
    <dbReference type="NCBI Taxonomy" id="351660"/>
    <lineage>
        <taxon>Eukaryota</taxon>
        <taxon>Metazoa</taxon>
        <taxon>Spiralia</taxon>
        <taxon>Lophotrochozoa</taxon>
        <taxon>Mollusca</taxon>
        <taxon>Gastropoda</taxon>
        <taxon>Caenogastropoda</taxon>
        <taxon>Neogastropoda</taxon>
        <taxon>Conoidea</taxon>
        <taxon>Conidae</taxon>
        <taxon>Conus</taxon>
        <taxon>Strategoconus</taxon>
    </lineage>
</organism>
<accession>A0A291NVT7</accession>
<comment type="function">
    <text evidence="2">Targets vasopressin-oxytocin related receptors.</text>
</comment>
<comment type="subcellular location">
    <subcellularLocation>
        <location evidence="7">Secreted</location>
    </subcellularLocation>
</comment>
<comment type="tissue specificity">
    <text evidence="7">Expressed by the venom gland.</text>
</comment>
<comment type="domain">
    <text evidence="6">The cysteine framework of the conopressin is C-C.</text>
</comment>
<comment type="mass spectrometry" mass="1034.46" method="MALDI" evidence="4">
    <molecule>Conopressin-E</molecule>
</comment>
<comment type="miscellaneous">
    <text evidence="7">The letter 'E' in the name 'Conopressin-E' proposed by Kumar and colleagues stands for the eighth residue, which differs between conopressins.</text>
</comment>
<comment type="similarity">
    <text evidence="6">Belongs to the vasopressin/oxytocin family.</text>
</comment>
<feature type="signal peptide" evidence="3">
    <location>
        <begin position="1" status="less than"/>
        <end position="22"/>
    </location>
</feature>
<feature type="chain" id="PRO_5012674281" description="Conopressin-conophysin, isoform 1">
    <location>
        <begin position="23"/>
        <end position="125"/>
    </location>
</feature>
<feature type="peptide" id="PRO_0000450735" description="Conopressin-E" evidence="4">
    <location>
        <begin position="23"/>
        <end position="31"/>
    </location>
</feature>
<feature type="propeptide" id="PRO_0000450736" evidence="2">
    <location>
        <begin position="32"/>
        <end position="39"/>
    </location>
</feature>
<feature type="chain" id="PRO_0000450737" description="Conophysin" evidence="2">
    <location>
        <begin position="40"/>
        <end position="125"/>
    </location>
</feature>
<feature type="modified residue" description="Glycine amide" evidence="4">
    <location>
        <position position="31"/>
    </location>
</feature>
<feature type="disulfide bond" evidence="2">
    <location>
        <begin position="23"/>
        <end position="28"/>
    </location>
</feature>
<feature type="disulfide bond" evidence="1">
    <location>
        <begin position="45"/>
        <end position="85"/>
    </location>
</feature>
<feature type="disulfide bond" evidence="1">
    <location>
        <begin position="48"/>
        <end position="59"/>
    </location>
</feature>
<feature type="disulfide bond" evidence="1">
    <location>
        <begin position="53"/>
        <end position="75"/>
    </location>
</feature>
<feature type="disulfide bond" evidence="1">
    <location>
        <begin position="60"/>
        <end position="65"/>
    </location>
</feature>
<feature type="disulfide bond" evidence="1">
    <location>
        <begin position="92"/>
        <end position="112"/>
    </location>
</feature>
<feature type="disulfide bond" evidence="1">
    <location>
        <begin position="104"/>
        <end position="124"/>
    </location>
</feature>
<feature type="disulfide bond" evidence="1">
    <location>
        <begin position="113"/>
        <end position="118"/>
    </location>
</feature>
<feature type="non-terminal residue" evidence="6">
    <location>
        <position position="1"/>
    </location>
</feature>
<keyword id="KW-0027">Amidation</keyword>
<keyword id="KW-0903">Direct protein sequencing</keyword>
<keyword id="KW-1015">Disulfide bond</keyword>
<keyword id="KW-1213">G-protein coupled receptor impairing toxin</keyword>
<keyword id="KW-0964">Secreted</keyword>
<keyword id="KW-0732">Signal</keyword>
<keyword id="KW-0800">Toxin</keyword>
<reference key="1">
    <citation type="journal article" date="2020" name="Biochim. Biophys. Acta">
        <title>Cone snail analogs of the pituitary hormones oxytocin/vasopressin and their carrier protein neurophysin. Proteomic and transcriptomic identification of conopressins and conophysins.</title>
        <authorList>
            <person name="Kumar S."/>
            <person name="Vijayasarathy M."/>
            <person name="Venkatesha M.A."/>
            <person name="Sunita P."/>
            <person name="Balaram P."/>
        </authorList>
    </citation>
    <scope>NUCLEOTIDE SEQUENCE [MRNA]</scope>
    <scope>PROTEIN SEQUENCE OF 23-31 AND 65-86</scope>
    <scope>AMIDATION AT GLY-31</scope>
    <scope>IDENTIFICATION BY MASS SPECTROMETRY</scope>
    <scope>SUBCELLULAR LOCATION</scope>
    <scope>SYNTHESIS OF 23-31</scope>
    <scope>NOMENCLATURE</scope>
    <source>
        <tissue>Venom</tissue>
        <tissue>Venom duct</tissue>
    </source>
</reference>
<evidence type="ECO:0000250" key="1">
    <source>
        <dbReference type="UniProtKB" id="P01175"/>
    </source>
</evidence>
<evidence type="ECO:0000250" key="2">
    <source>
        <dbReference type="UniProtKB" id="P05486"/>
    </source>
</evidence>
<evidence type="ECO:0000255" key="3"/>
<evidence type="ECO:0000269" key="4">
    <source>
    </source>
</evidence>
<evidence type="ECO:0000303" key="5">
    <source>
    </source>
</evidence>
<evidence type="ECO:0000305" key="6"/>
<evidence type="ECO:0000305" key="7">
    <source>
    </source>
</evidence>
<sequence length="125" mass="13425">MQMGRPTLLPCLLLLLVLSTQACFIRNCPEGGKRDVHMIQPTKPCMNCSFGQCVGPRVCCGAGRCEIGSTEADRCEEENEDPVPCKVLGQHCVLNNPGNVNGNCVDGGIGICCVDDTCAIHRRCD</sequence>
<name>CESS1_CONMO</name>